<proteinExistence type="inferred from homology"/>
<reference key="1">
    <citation type="journal article" date="2011" name="J. Bacteriol.">
        <title>Comparative genomics of 28 Salmonella enterica isolates: evidence for CRISPR-mediated adaptive sublineage evolution.</title>
        <authorList>
            <person name="Fricke W.F."/>
            <person name="Mammel M.K."/>
            <person name="McDermott P.F."/>
            <person name="Tartera C."/>
            <person name="White D.G."/>
            <person name="Leclerc J.E."/>
            <person name="Ravel J."/>
            <person name="Cebula T.A."/>
        </authorList>
    </citation>
    <scope>NUCLEOTIDE SEQUENCE [LARGE SCALE GENOMIC DNA]</scope>
    <source>
        <strain>CVM19633</strain>
    </source>
</reference>
<sequence>MASLIQVRDLLALRGRMEATQISHTLHAPQPMIDAMLNQLEIMGKAVRIPEEPDGCLSGSCKSCPEGKACLREWWALR</sequence>
<dbReference type="EMBL" id="CP001127">
    <property type="protein sequence ID" value="ACF89256.1"/>
    <property type="molecule type" value="Genomic_DNA"/>
</dbReference>
<dbReference type="RefSeq" id="WP_000157589.1">
    <property type="nucleotide sequence ID" value="NC_011094.1"/>
</dbReference>
<dbReference type="SMR" id="B4TY66"/>
<dbReference type="KEGG" id="sew:SeSA_A3705"/>
<dbReference type="HOGENOM" id="CLU_189182_0_0_6"/>
<dbReference type="Proteomes" id="UP000001865">
    <property type="component" value="Chromosome"/>
</dbReference>
<dbReference type="GO" id="GO:0003677">
    <property type="term" value="F:DNA binding"/>
    <property type="evidence" value="ECO:0007669"/>
    <property type="project" value="UniProtKB-KW"/>
</dbReference>
<dbReference type="GO" id="GO:0005506">
    <property type="term" value="F:iron ion binding"/>
    <property type="evidence" value="ECO:0007669"/>
    <property type="project" value="UniProtKB-UniRule"/>
</dbReference>
<dbReference type="GO" id="GO:0051536">
    <property type="term" value="F:iron-sulfur cluster binding"/>
    <property type="evidence" value="ECO:0007669"/>
    <property type="project" value="UniProtKB-KW"/>
</dbReference>
<dbReference type="Gene3D" id="1.10.10.10">
    <property type="entry name" value="Winged helix-like DNA-binding domain superfamily/Winged helix DNA-binding domain"/>
    <property type="match status" value="1"/>
</dbReference>
<dbReference type="HAMAP" id="MF_01586">
    <property type="entry name" value="FeoC"/>
    <property type="match status" value="1"/>
</dbReference>
<dbReference type="InterPro" id="IPR023732">
    <property type="entry name" value="FeoC"/>
</dbReference>
<dbReference type="InterPro" id="IPR015102">
    <property type="entry name" value="Tscrpt_reg_HTH_FeoC"/>
</dbReference>
<dbReference type="InterPro" id="IPR036388">
    <property type="entry name" value="WH-like_DNA-bd_sf"/>
</dbReference>
<dbReference type="InterPro" id="IPR036390">
    <property type="entry name" value="WH_DNA-bd_sf"/>
</dbReference>
<dbReference type="NCBIfam" id="NF011960">
    <property type="entry name" value="PRK15431.1"/>
    <property type="match status" value="1"/>
</dbReference>
<dbReference type="Pfam" id="PF09012">
    <property type="entry name" value="FeoC"/>
    <property type="match status" value="1"/>
</dbReference>
<dbReference type="SUPFAM" id="SSF46785">
    <property type="entry name" value="Winged helix' DNA-binding domain"/>
    <property type="match status" value="1"/>
</dbReference>
<protein>
    <recommendedName>
        <fullName evidence="1">Probable [Fe-S]-dependent transcriptional repressor</fullName>
    </recommendedName>
</protein>
<name>FEOC_SALSV</name>
<gene>
    <name evidence="1" type="primary">feoC</name>
    <name type="ordered locus">SeSA_A3705</name>
</gene>
<feature type="chain" id="PRO_1000201337" description="Probable [Fe-S]-dependent transcriptional repressor">
    <location>
        <begin position="1"/>
        <end position="78"/>
    </location>
</feature>
<feature type="binding site" evidence="1">
    <location>
        <position position="56"/>
    </location>
    <ligand>
        <name>iron-sulfur cluster</name>
        <dbReference type="ChEBI" id="CHEBI:30408"/>
    </ligand>
</feature>
<feature type="binding site" evidence="1">
    <location>
        <position position="61"/>
    </location>
    <ligand>
        <name>iron-sulfur cluster</name>
        <dbReference type="ChEBI" id="CHEBI:30408"/>
    </ligand>
</feature>
<feature type="binding site" evidence="1">
    <location>
        <position position="64"/>
    </location>
    <ligand>
        <name>iron-sulfur cluster</name>
        <dbReference type="ChEBI" id="CHEBI:30408"/>
    </ligand>
</feature>
<feature type="binding site" evidence="1">
    <location>
        <position position="70"/>
    </location>
    <ligand>
        <name>iron-sulfur cluster</name>
        <dbReference type="ChEBI" id="CHEBI:30408"/>
    </ligand>
</feature>
<accession>B4TY66</accession>
<keyword id="KW-0238">DNA-binding</keyword>
<keyword id="KW-0408">Iron</keyword>
<keyword id="KW-0411">Iron-sulfur</keyword>
<keyword id="KW-0479">Metal-binding</keyword>
<keyword id="KW-0678">Repressor</keyword>
<keyword id="KW-0804">Transcription</keyword>
<keyword id="KW-0805">Transcription regulation</keyword>
<organism>
    <name type="scientific">Salmonella schwarzengrund (strain CVM19633)</name>
    <dbReference type="NCBI Taxonomy" id="439843"/>
    <lineage>
        <taxon>Bacteria</taxon>
        <taxon>Pseudomonadati</taxon>
        <taxon>Pseudomonadota</taxon>
        <taxon>Gammaproteobacteria</taxon>
        <taxon>Enterobacterales</taxon>
        <taxon>Enterobacteriaceae</taxon>
        <taxon>Salmonella</taxon>
    </lineage>
</organism>
<evidence type="ECO:0000255" key="1">
    <source>
        <dbReference type="HAMAP-Rule" id="MF_01586"/>
    </source>
</evidence>
<comment type="function">
    <text evidence="1">May function as a transcriptional regulator that controls feoABC expression.</text>
</comment>
<comment type="similarity">
    <text evidence="1">Belongs to the FeoC family.</text>
</comment>